<dbReference type="EMBL" id="AL590842">
    <property type="protein sequence ID" value="CAL19464.1"/>
    <property type="molecule type" value="Genomic_DNA"/>
</dbReference>
<dbReference type="EMBL" id="AE009952">
    <property type="protein sequence ID" value="AAM86730.1"/>
    <property type="molecule type" value="Genomic_DNA"/>
</dbReference>
<dbReference type="EMBL" id="AE017042">
    <property type="protein sequence ID" value="AAS63047.1"/>
    <property type="molecule type" value="Genomic_DNA"/>
</dbReference>
<dbReference type="PIR" id="AF0097">
    <property type="entry name" value="AF0097"/>
</dbReference>
<dbReference type="RefSeq" id="WP_002209842.1">
    <property type="nucleotide sequence ID" value="NZ_WUCM01000007.1"/>
</dbReference>
<dbReference type="RefSeq" id="YP_002345847.1">
    <property type="nucleotide sequence ID" value="NC_003143.1"/>
</dbReference>
<dbReference type="SMR" id="Q7CGZ2"/>
<dbReference type="IntAct" id="Q7CGZ2">
    <property type="interactions" value="1"/>
</dbReference>
<dbReference type="STRING" id="214092.YPO0792"/>
<dbReference type="PaxDb" id="214092-YPO0792"/>
<dbReference type="DNASU" id="1148127"/>
<dbReference type="EnsemblBacteria" id="AAS63047">
    <property type="protein sequence ID" value="AAS63047"/>
    <property type="gene ID" value="YP_2865"/>
</dbReference>
<dbReference type="GeneID" id="96662409"/>
<dbReference type="KEGG" id="ype:YPO0792"/>
<dbReference type="KEGG" id="ypk:y3180"/>
<dbReference type="KEGG" id="ypm:YP_2865"/>
<dbReference type="PATRIC" id="fig|214092.21.peg.1054"/>
<dbReference type="eggNOG" id="COG0477">
    <property type="taxonomic scope" value="Bacteria"/>
</dbReference>
<dbReference type="HOGENOM" id="CLU_047399_0_0_6"/>
<dbReference type="OMA" id="ICFGFNP"/>
<dbReference type="OrthoDB" id="9803968at2"/>
<dbReference type="Proteomes" id="UP000000815">
    <property type="component" value="Chromosome"/>
</dbReference>
<dbReference type="Proteomes" id="UP000001019">
    <property type="component" value="Chromosome"/>
</dbReference>
<dbReference type="Proteomes" id="UP000002490">
    <property type="component" value="Chromosome"/>
</dbReference>
<dbReference type="GO" id="GO:0005886">
    <property type="term" value="C:plasma membrane"/>
    <property type="evidence" value="ECO:0007669"/>
    <property type="project" value="UniProtKB-SubCell"/>
</dbReference>
<dbReference type="GO" id="GO:0051978">
    <property type="term" value="F:lysophospholipid:sodium symporter activity"/>
    <property type="evidence" value="ECO:0007669"/>
    <property type="project" value="InterPro"/>
</dbReference>
<dbReference type="CDD" id="cd06173">
    <property type="entry name" value="MFS_MefA_like"/>
    <property type="match status" value="1"/>
</dbReference>
<dbReference type="Gene3D" id="1.20.1250.20">
    <property type="entry name" value="MFS general substrate transporter like domains"/>
    <property type="match status" value="1"/>
</dbReference>
<dbReference type="HAMAP" id="MF_01585">
    <property type="entry name" value="MFS_LplT"/>
    <property type="match status" value="1"/>
</dbReference>
<dbReference type="InterPro" id="IPR023727">
    <property type="entry name" value="LysoPLipid__transptr_LplT"/>
</dbReference>
<dbReference type="InterPro" id="IPR011701">
    <property type="entry name" value="MFS"/>
</dbReference>
<dbReference type="InterPro" id="IPR036259">
    <property type="entry name" value="MFS_trans_sf"/>
</dbReference>
<dbReference type="NCBIfam" id="NF008397">
    <property type="entry name" value="PRK11195.1"/>
    <property type="match status" value="1"/>
</dbReference>
<dbReference type="PANTHER" id="PTHR43266">
    <property type="entry name" value="MACROLIDE-EFFLUX PROTEIN"/>
    <property type="match status" value="1"/>
</dbReference>
<dbReference type="PANTHER" id="PTHR43266:SF2">
    <property type="entry name" value="MAJOR FACILITATOR SUPERFAMILY (MFS) PROFILE DOMAIN-CONTAINING PROTEIN"/>
    <property type="match status" value="1"/>
</dbReference>
<dbReference type="Pfam" id="PF07690">
    <property type="entry name" value="MFS_1"/>
    <property type="match status" value="1"/>
</dbReference>
<dbReference type="SUPFAM" id="SSF103473">
    <property type="entry name" value="MFS general substrate transporter"/>
    <property type="match status" value="1"/>
</dbReference>
<name>LPLT_YERPE</name>
<accession>Q7CGZ2</accession>
<accession>Q74RZ5</accession>
<gene>
    <name evidence="1" type="primary">lplT</name>
    <name type="ordered locus">YPO0792</name>
    <name type="ordered locus">y3180</name>
    <name type="ordered locus">YP_2865</name>
</gene>
<proteinExistence type="inferred from homology"/>
<protein>
    <recommendedName>
        <fullName evidence="1">Lysophospholipid transporter LplT</fullName>
    </recommendedName>
</protein>
<feature type="chain" id="PRO_0000309840" description="Lysophospholipid transporter LplT">
    <location>
        <begin position="1"/>
        <end position="406"/>
    </location>
</feature>
<feature type="transmembrane region" description="Helical" evidence="1">
    <location>
        <begin position="16"/>
        <end position="36"/>
    </location>
</feature>
<feature type="transmembrane region" description="Helical" evidence="1">
    <location>
        <begin position="53"/>
        <end position="73"/>
    </location>
</feature>
<feature type="transmembrane region" description="Helical" evidence="1">
    <location>
        <begin position="91"/>
        <end position="111"/>
    </location>
</feature>
<feature type="transmembrane region" description="Helical" evidence="1">
    <location>
        <begin position="139"/>
        <end position="159"/>
    </location>
</feature>
<feature type="transmembrane region" description="Helical" evidence="1">
    <location>
        <begin position="164"/>
        <end position="184"/>
    </location>
</feature>
<feature type="transmembrane region" description="Helical" evidence="1">
    <location>
        <begin position="227"/>
        <end position="247"/>
    </location>
</feature>
<feature type="transmembrane region" description="Helical" evidence="1">
    <location>
        <begin position="253"/>
        <end position="273"/>
    </location>
</feature>
<feature type="transmembrane region" description="Helical" evidence="1">
    <location>
        <begin position="285"/>
        <end position="305"/>
    </location>
</feature>
<feature type="transmembrane region" description="Helical" evidence="1">
    <location>
        <begin position="310"/>
        <end position="330"/>
    </location>
</feature>
<feature type="transmembrane region" description="Helical" evidence="1">
    <location>
        <begin position="349"/>
        <end position="369"/>
    </location>
</feature>
<feature type="transmembrane region" description="Helical" evidence="1">
    <location>
        <begin position="372"/>
        <end position="392"/>
    </location>
</feature>
<comment type="function">
    <text evidence="1">Catalyzes the facilitated diffusion of 2-acyl-glycero-3-phosphoethanolamine (2-acyl-GPE) into the cell.</text>
</comment>
<comment type="subcellular location">
    <subcellularLocation>
        <location evidence="1">Cell inner membrane</location>
        <topology evidence="1">Multi-pass membrane protein</topology>
    </subcellularLocation>
</comment>
<comment type="similarity">
    <text evidence="1">Belongs to the major facilitator superfamily. LplT (TC 2.A.1.42) family.</text>
</comment>
<organism>
    <name type="scientific">Yersinia pestis</name>
    <dbReference type="NCBI Taxonomy" id="632"/>
    <lineage>
        <taxon>Bacteria</taxon>
        <taxon>Pseudomonadati</taxon>
        <taxon>Pseudomonadota</taxon>
        <taxon>Gammaproteobacteria</taxon>
        <taxon>Enterobacterales</taxon>
        <taxon>Yersiniaceae</taxon>
        <taxon>Yersinia</taxon>
    </lineage>
</organism>
<keyword id="KW-0997">Cell inner membrane</keyword>
<keyword id="KW-1003">Cell membrane</keyword>
<keyword id="KW-0445">Lipid transport</keyword>
<keyword id="KW-0472">Membrane</keyword>
<keyword id="KW-1185">Reference proteome</keyword>
<keyword id="KW-0812">Transmembrane</keyword>
<keyword id="KW-1133">Transmembrane helix</keyword>
<keyword id="KW-0813">Transport</keyword>
<reference key="1">
    <citation type="journal article" date="2001" name="Nature">
        <title>Genome sequence of Yersinia pestis, the causative agent of plague.</title>
        <authorList>
            <person name="Parkhill J."/>
            <person name="Wren B.W."/>
            <person name="Thomson N.R."/>
            <person name="Titball R.W."/>
            <person name="Holden M.T.G."/>
            <person name="Prentice M.B."/>
            <person name="Sebaihia M."/>
            <person name="James K.D."/>
            <person name="Churcher C.M."/>
            <person name="Mungall K.L."/>
            <person name="Baker S."/>
            <person name="Basham D."/>
            <person name="Bentley S.D."/>
            <person name="Brooks K."/>
            <person name="Cerdeno-Tarraga A.-M."/>
            <person name="Chillingworth T."/>
            <person name="Cronin A."/>
            <person name="Davies R.M."/>
            <person name="Davis P."/>
            <person name="Dougan G."/>
            <person name="Feltwell T."/>
            <person name="Hamlin N."/>
            <person name="Holroyd S."/>
            <person name="Jagels K."/>
            <person name="Karlyshev A.V."/>
            <person name="Leather S."/>
            <person name="Moule S."/>
            <person name="Oyston P.C.F."/>
            <person name="Quail M.A."/>
            <person name="Rutherford K.M."/>
            <person name="Simmonds M."/>
            <person name="Skelton J."/>
            <person name="Stevens K."/>
            <person name="Whitehead S."/>
            <person name="Barrell B.G."/>
        </authorList>
    </citation>
    <scope>NUCLEOTIDE SEQUENCE [LARGE SCALE GENOMIC DNA]</scope>
    <source>
        <strain>CO-92 / Biovar Orientalis</strain>
    </source>
</reference>
<reference key="2">
    <citation type="journal article" date="2002" name="J. Bacteriol.">
        <title>Genome sequence of Yersinia pestis KIM.</title>
        <authorList>
            <person name="Deng W."/>
            <person name="Burland V."/>
            <person name="Plunkett G. III"/>
            <person name="Boutin A."/>
            <person name="Mayhew G.F."/>
            <person name="Liss P."/>
            <person name="Perna N.T."/>
            <person name="Rose D.J."/>
            <person name="Mau B."/>
            <person name="Zhou S."/>
            <person name="Schwartz D.C."/>
            <person name="Fetherston J.D."/>
            <person name="Lindler L.E."/>
            <person name="Brubaker R.R."/>
            <person name="Plano G.V."/>
            <person name="Straley S.C."/>
            <person name="McDonough K.A."/>
            <person name="Nilles M.L."/>
            <person name="Matson J.S."/>
            <person name="Blattner F.R."/>
            <person name="Perry R.D."/>
        </authorList>
    </citation>
    <scope>NUCLEOTIDE SEQUENCE [LARGE SCALE GENOMIC DNA]</scope>
    <source>
        <strain>KIM10+ / Biovar Mediaevalis</strain>
    </source>
</reference>
<reference key="3">
    <citation type="journal article" date="2004" name="DNA Res.">
        <title>Complete genome sequence of Yersinia pestis strain 91001, an isolate avirulent to humans.</title>
        <authorList>
            <person name="Song Y."/>
            <person name="Tong Z."/>
            <person name="Wang J."/>
            <person name="Wang L."/>
            <person name="Guo Z."/>
            <person name="Han Y."/>
            <person name="Zhang J."/>
            <person name="Pei D."/>
            <person name="Zhou D."/>
            <person name="Qin H."/>
            <person name="Pang X."/>
            <person name="Han Y."/>
            <person name="Zhai J."/>
            <person name="Li M."/>
            <person name="Cui B."/>
            <person name="Qi Z."/>
            <person name="Jin L."/>
            <person name="Dai R."/>
            <person name="Chen F."/>
            <person name="Li S."/>
            <person name="Ye C."/>
            <person name="Du Z."/>
            <person name="Lin W."/>
            <person name="Wang J."/>
            <person name="Yu J."/>
            <person name="Yang H."/>
            <person name="Wang J."/>
            <person name="Huang P."/>
            <person name="Yang R."/>
        </authorList>
    </citation>
    <scope>NUCLEOTIDE SEQUENCE [LARGE SCALE GENOMIC DNA]</scope>
    <source>
        <strain>91001 / Biovar Mediaevalis</strain>
    </source>
</reference>
<sequence length="406" mass="42841">MSQDVLADKPLLSRSMVAVLCAQFFSAFGDNALLFATLALIKQQLYPDWSQPILQMAFVATYIVLAPFVGQIADGFAKGRVMMVANGLKLAGALVICFGLNPFLGYSLVGVGAAAYSPAKYGILGEITSGEQLVKANGMMEASTIAAILLGSVAGGILADWHLMAALGVCALVYAIAVIANLFIPRLAAARSGASWRPRAMTGSFFTACRLLWQDSETRFSLAGTSLFWGAGVTLRFLLVLWVPVALGIADNATPTLLNAMVAIGIVVGAGAAARFVTLKTVKRCLPAGVLIGVMVTIFSLQNSMPMAYLLLIIIGILGGFFVVPLNALLQERGKHSVGAGNAIAVQNLGENTAMLFMLGLYSLVVKLGAPVVAVGVGFGVVFALAIALLWGWQWRQQRQKTRQPE</sequence>
<evidence type="ECO:0000255" key="1">
    <source>
        <dbReference type="HAMAP-Rule" id="MF_01585"/>
    </source>
</evidence>